<accession>Q6GJ90</accession>
<sequence>MIIYRQYQHEGAPVYEIITKTFQHVSIKCDDSFSDTEIFKLLSLLQDDIDHMKVS</sequence>
<reference key="1">
    <citation type="journal article" date="2004" name="Proc. Natl. Acad. Sci. U.S.A.">
        <title>Complete genomes of two clinical Staphylococcus aureus strains: evidence for the rapid evolution of virulence and drug resistance.</title>
        <authorList>
            <person name="Holden M.T.G."/>
            <person name="Feil E.J."/>
            <person name="Lindsay J.A."/>
            <person name="Peacock S.J."/>
            <person name="Day N.P.J."/>
            <person name="Enright M.C."/>
            <person name="Foster T.J."/>
            <person name="Moore C.E."/>
            <person name="Hurst L."/>
            <person name="Atkin R."/>
            <person name="Barron A."/>
            <person name="Bason N."/>
            <person name="Bentley S.D."/>
            <person name="Chillingworth C."/>
            <person name="Chillingworth T."/>
            <person name="Churcher C."/>
            <person name="Clark L."/>
            <person name="Corton C."/>
            <person name="Cronin A."/>
            <person name="Doggett J."/>
            <person name="Dowd L."/>
            <person name="Feltwell T."/>
            <person name="Hance Z."/>
            <person name="Harris B."/>
            <person name="Hauser H."/>
            <person name="Holroyd S."/>
            <person name="Jagels K."/>
            <person name="James K.D."/>
            <person name="Lennard N."/>
            <person name="Line A."/>
            <person name="Mayes R."/>
            <person name="Moule S."/>
            <person name="Mungall K."/>
            <person name="Ormond D."/>
            <person name="Quail M.A."/>
            <person name="Rabbinowitsch E."/>
            <person name="Rutherford K.M."/>
            <person name="Sanders M."/>
            <person name="Sharp S."/>
            <person name="Simmonds M."/>
            <person name="Stevens K."/>
            <person name="Whitehead S."/>
            <person name="Barrell B.G."/>
            <person name="Spratt B.G."/>
            <person name="Parkhill J."/>
        </authorList>
    </citation>
    <scope>NUCLEOTIDE SEQUENCE [LARGE SCALE GENOMIC DNA]</scope>
    <source>
        <strain>MRSA252</strain>
    </source>
</reference>
<proteinExistence type="predicted"/>
<organism>
    <name type="scientific">Staphylococcus aureus (strain MRSA252)</name>
    <dbReference type="NCBI Taxonomy" id="282458"/>
    <lineage>
        <taxon>Bacteria</taxon>
        <taxon>Bacillati</taxon>
        <taxon>Bacillota</taxon>
        <taxon>Bacilli</taxon>
        <taxon>Bacillales</taxon>
        <taxon>Staphylococcaceae</taxon>
        <taxon>Staphylococcus</taxon>
    </lineage>
</organism>
<protein>
    <recommendedName>
        <fullName>Protein VraX</fullName>
    </recommendedName>
</protein>
<name>VRAX_STAAR</name>
<gene>
    <name type="primary">vraX</name>
    <name type="ordered locus">SAR0584</name>
</gene>
<dbReference type="EMBL" id="BX571856">
    <property type="protein sequence ID" value="CAG39604.1"/>
    <property type="molecule type" value="Genomic_DNA"/>
</dbReference>
<dbReference type="RefSeq" id="WP_000587960.1">
    <property type="nucleotide sequence ID" value="NC_002952.2"/>
</dbReference>
<dbReference type="KEGG" id="sar:SAR0584"/>
<dbReference type="HOGENOM" id="CLU_212227_0_0_9"/>
<dbReference type="Proteomes" id="UP000000596">
    <property type="component" value="Chromosome"/>
</dbReference>
<dbReference type="InterPro" id="IPR035374">
    <property type="entry name" value="VraX"/>
</dbReference>
<dbReference type="Pfam" id="PF17412">
    <property type="entry name" value="VraX"/>
    <property type="match status" value="1"/>
</dbReference>
<feature type="chain" id="PRO_0000065923" description="Protein VraX">
    <location>
        <begin position="1"/>
        <end position="55"/>
    </location>
</feature>